<protein>
    <recommendedName>
        <fullName evidence="1">Phenylalanine--tRNA ligase beta subunit</fullName>
        <ecNumber evidence="1">6.1.1.20</ecNumber>
    </recommendedName>
    <alternativeName>
        <fullName evidence="1">Phenylalanyl-tRNA synthetase beta subunit</fullName>
        <shortName evidence="1">PheRS</shortName>
    </alternativeName>
</protein>
<keyword id="KW-0030">Aminoacyl-tRNA synthetase</keyword>
<keyword id="KW-0067">ATP-binding</keyword>
<keyword id="KW-0963">Cytoplasm</keyword>
<keyword id="KW-0436">Ligase</keyword>
<keyword id="KW-0460">Magnesium</keyword>
<keyword id="KW-0479">Metal-binding</keyword>
<keyword id="KW-0547">Nucleotide-binding</keyword>
<keyword id="KW-0648">Protein biosynthesis</keyword>
<keyword id="KW-0694">RNA-binding</keyword>
<keyword id="KW-0820">tRNA-binding</keyword>
<comment type="catalytic activity">
    <reaction evidence="1">
        <text>tRNA(Phe) + L-phenylalanine + ATP = L-phenylalanyl-tRNA(Phe) + AMP + diphosphate + H(+)</text>
        <dbReference type="Rhea" id="RHEA:19413"/>
        <dbReference type="Rhea" id="RHEA-COMP:9668"/>
        <dbReference type="Rhea" id="RHEA-COMP:9699"/>
        <dbReference type="ChEBI" id="CHEBI:15378"/>
        <dbReference type="ChEBI" id="CHEBI:30616"/>
        <dbReference type="ChEBI" id="CHEBI:33019"/>
        <dbReference type="ChEBI" id="CHEBI:58095"/>
        <dbReference type="ChEBI" id="CHEBI:78442"/>
        <dbReference type="ChEBI" id="CHEBI:78531"/>
        <dbReference type="ChEBI" id="CHEBI:456215"/>
        <dbReference type="EC" id="6.1.1.20"/>
    </reaction>
</comment>
<comment type="cofactor">
    <cofactor evidence="1">
        <name>Mg(2+)</name>
        <dbReference type="ChEBI" id="CHEBI:18420"/>
    </cofactor>
    <text evidence="1">Binds 2 magnesium ions per tetramer.</text>
</comment>
<comment type="subunit">
    <text evidence="1">Tetramer of two alpha and two beta subunits.</text>
</comment>
<comment type="subcellular location">
    <subcellularLocation>
        <location>Cytoplasm</location>
    </subcellularLocation>
</comment>
<comment type="similarity">
    <text evidence="1">Belongs to the phenylalanyl-tRNA synthetase beta subunit family. Type 1 subfamily.</text>
</comment>
<reference key="1">
    <citation type="journal article" date="2001" name="Lancet">
        <title>Whole genome sequencing of meticillin-resistant Staphylococcus aureus.</title>
        <authorList>
            <person name="Kuroda M."/>
            <person name="Ohta T."/>
            <person name="Uchiyama I."/>
            <person name="Baba T."/>
            <person name="Yuzawa H."/>
            <person name="Kobayashi I."/>
            <person name="Cui L."/>
            <person name="Oguchi A."/>
            <person name="Aoki K."/>
            <person name="Nagai Y."/>
            <person name="Lian J.-Q."/>
            <person name="Ito T."/>
            <person name="Kanamori M."/>
            <person name="Matsumaru H."/>
            <person name="Maruyama A."/>
            <person name="Murakami H."/>
            <person name="Hosoyama A."/>
            <person name="Mizutani-Ui Y."/>
            <person name="Takahashi N.K."/>
            <person name="Sawano T."/>
            <person name="Inoue R."/>
            <person name="Kaito C."/>
            <person name="Sekimizu K."/>
            <person name="Hirakawa H."/>
            <person name="Kuhara S."/>
            <person name="Goto S."/>
            <person name="Yabuzaki J."/>
            <person name="Kanehisa M."/>
            <person name="Yamashita A."/>
            <person name="Oshima K."/>
            <person name="Furuya K."/>
            <person name="Yoshino C."/>
            <person name="Shiba T."/>
            <person name="Hattori M."/>
            <person name="Ogasawara N."/>
            <person name="Hayashi H."/>
            <person name="Hiramatsu K."/>
        </authorList>
    </citation>
    <scope>NUCLEOTIDE SEQUENCE [LARGE SCALE GENOMIC DNA]</scope>
    <source>
        <strain>N315</strain>
    </source>
</reference>
<reference key="2">
    <citation type="submission" date="2007-10" db="UniProtKB">
        <title>Shotgun proteomic analysis of total and membrane protein extracts of S. aureus strain N315.</title>
        <authorList>
            <person name="Vaezzadeh A.R."/>
            <person name="Deshusses J."/>
            <person name="Lescuyer P."/>
            <person name="Hochstrasser D.F."/>
        </authorList>
    </citation>
    <scope>IDENTIFICATION BY MASS SPECTROMETRY [LARGE SCALE ANALYSIS]</scope>
    <source>
        <strain>N315</strain>
    </source>
</reference>
<evidence type="ECO:0000255" key="1">
    <source>
        <dbReference type="HAMAP-Rule" id="MF_00283"/>
    </source>
</evidence>
<organism>
    <name type="scientific">Staphylococcus aureus (strain N315)</name>
    <dbReference type="NCBI Taxonomy" id="158879"/>
    <lineage>
        <taxon>Bacteria</taxon>
        <taxon>Bacillati</taxon>
        <taxon>Bacillota</taxon>
        <taxon>Bacilli</taxon>
        <taxon>Bacillales</taxon>
        <taxon>Staphylococcaceae</taxon>
        <taxon>Staphylococcus</taxon>
    </lineage>
</organism>
<proteinExistence type="evidence at protein level"/>
<gene>
    <name evidence="1" type="primary">pheT</name>
    <name type="ordered locus">SA0986</name>
</gene>
<feature type="chain" id="PRO_0000126950" description="Phenylalanine--tRNA ligase beta subunit">
    <location>
        <begin position="1"/>
        <end position="800"/>
    </location>
</feature>
<feature type="domain" description="tRNA-binding" evidence="1">
    <location>
        <begin position="39"/>
        <end position="154"/>
    </location>
</feature>
<feature type="domain" description="B5" evidence="1">
    <location>
        <begin position="408"/>
        <end position="483"/>
    </location>
</feature>
<feature type="domain" description="FDX-ACB" evidence="1">
    <location>
        <begin position="708"/>
        <end position="800"/>
    </location>
</feature>
<feature type="binding site" evidence="1">
    <location>
        <position position="461"/>
    </location>
    <ligand>
        <name>Mg(2+)</name>
        <dbReference type="ChEBI" id="CHEBI:18420"/>
        <note>shared with alpha subunit</note>
    </ligand>
</feature>
<feature type="binding site" evidence="1">
    <location>
        <position position="467"/>
    </location>
    <ligand>
        <name>Mg(2+)</name>
        <dbReference type="ChEBI" id="CHEBI:18420"/>
        <note>shared with alpha subunit</note>
    </ligand>
</feature>
<feature type="binding site" evidence="1">
    <location>
        <position position="470"/>
    </location>
    <ligand>
        <name>Mg(2+)</name>
        <dbReference type="ChEBI" id="CHEBI:18420"/>
        <note>shared with alpha subunit</note>
    </ligand>
</feature>
<feature type="binding site" evidence="1">
    <location>
        <position position="471"/>
    </location>
    <ligand>
        <name>Mg(2+)</name>
        <dbReference type="ChEBI" id="CHEBI:18420"/>
        <note>shared with alpha subunit</note>
    </ligand>
</feature>
<name>SYFB_STAAN</name>
<accession>P67041</accession>
<accession>Q99UW6</accession>
<sequence>MLISNEWLKEYVTIDDSVSDLAERITRTGIEVDDLIDYTKDIKNLVVGFVKSKEKHPDADKLNVCQVDIGEDEPVQIVCGAPNVDAGQYVIVAKVGGRLPGGIKIKRAKLRGERSEGMICSLQEIGISSNYIPKSFESGIYVFSESQVPGTDALQALYLDDQVMEFDLTPNRADALSMIGTAYEVAALYNTKMTKPETTSNELELSANDELTVTIENEDKVPYYSARVVHDVTIEPSPIWMQARLIKAGIRPINNVVDISNYVLLEYGQPLHMFDQDAIGSQQIVVRQANEGEKMTTLDDTERELLTSDIVITNGQTPIALAGVMGGDFSEVKEQTSNIVIEGAIFDPVSIRHTSRRLNLRSESSSRFEKGIATEFVDEAVDRACYLLQTYANGKVLKDRVSSGELGAFITPIDITADKINRTIGFDLSQNDIVTIFNQLGFDTEINDDVITVLVPSRRKDITIKEDLIEEVARIYGYDDIPSTLPVFDKVTSGQLTDRQYKTRMVKEVLEGAGLDQAITYSLVSKEDATAFSMQQRQTIDLLMPMSEAHASLRQSLLPHLIEAASYNVARKNKDVKLFEIGNVFFANGEGELPDQVEYLSGILTGDYVVNQWQGKKETVDFYLAKGVVDRVSEKLNLEFSYRRADIDGLHPGRTAEILLENKVVGFIGELHPTLAADNDLKRTYVFELNFDALMAVSVGYINYQPIPRFPGMSRDIALEVDQNIPAADLLSTIHAHGGNILKDTLVFDVYQGEHLEKGKKSIAIRLNYLDTEETLTDERVSKVQAEIEAALIEQGAVIR</sequence>
<dbReference type="EC" id="6.1.1.20" evidence="1"/>
<dbReference type="EMBL" id="BA000018">
    <property type="protein sequence ID" value="BAB42235.1"/>
    <property type="molecule type" value="Genomic_DNA"/>
</dbReference>
<dbReference type="PIR" id="G89884">
    <property type="entry name" value="G89884"/>
</dbReference>
<dbReference type="RefSeq" id="WP_000908969.1">
    <property type="nucleotide sequence ID" value="NC_002745.2"/>
</dbReference>
<dbReference type="SMR" id="P67041"/>
<dbReference type="EnsemblBacteria" id="BAB42235">
    <property type="protein sequence ID" value="BAB42235"/>
    <property type="gene ID" value="BAB42235"/>
</dbReference>
<dbReference type="KEGG" id="sau:SA0986"/>
<dbReference type="HOGENOM" id="CLU_016891_0_0_9"/>
<dbReference type="GO" id="GO:0009328">
    <property type="term" value="C:phenylalanine-tRNA ligase complex"/>
    <property type="evidence" value="ECO:0007669"/>
    <property type="project" value="TreeGrafter"/>
</dbReference>
<dbReference type="GO" id="GO:0005524">
    <property type="term" value="F:ATP binding"/>
    <property type="evidence" value="ECO:0007669"/>
    <property type="project" value="UniProtKB-UniRule"/>
</dbReference>
<dbReference type="GO" id="GO:0140096">
    <property type="term" value="F:catalytic activity, acting on a protein"/>
    <property type="evidence" value="ECO:0007669"/>
    <property type="project" value="UniProtKB-ARBA"/>
</dbReference>
<dbReference type="GO" id="GO:0000287">
    <property type="term" value="F:magnesium ion binding"/>
    <property type="evidence" value="ECO:0007669"/>
    <property type="project" value="UniProtKB-UniRule"/>
</dbReference>
<dbReference type="GO" id="GO:0004826">
    <property type="term" value="F:phenylalanine-tRNA ligase activity"/>
    <property type="evidence" value="ECO:0007669"/>
    <property type="project" value="UniProtKB-UniRule"/>
</dbReference>
<dbReference type="GO" id="GO:0016740">
    <property type="term" value="F:transferase activity"/>
    <property type="evidence" value="ECO:0007669"/>
    <property type="project" value="UniProtKB-ARBA"/>
</dbReference>
<dbReference type="GO" id="GO:0000049">
    <property type="term" value="F:tRNA binding"/>
    <property type="evidence" value="ECO:0007669"/>
    <property type="project" value="UniProtKB-KW"/>
</dbReference>
<dbReference type="GO" id="GO:0006432">
    <property type="term" value="P:phenylalanyl-tRNA aminoacylation"/>
    <property type="evidence" value="ECO:0007669"/>
    <property type="project" value="UniProtKB-UniRule"/>
</dbReference>
<dbReference type="CDD" id="cd00769">
    <property type="entry name" value="PheRS_beta_core"/>
    <property type="match status" value="1"/>
</dbReference>
<dbReference type="CDD" id="cd02796">
    <property type="entry name" value="tRNA_bind_bactPheRS"/>
    <property type="match status" value="1"/>
</dbReference>
<dbReference type="FunFam" id="2.40.50.140:FF:000045">
    <property type="entry name" value="Phenylalanine--tRNA ligase beta subunit"/>
    <property type="match status" value="1"/>
</dbReference>
<dbReference type="FunFam" id="3.30.56.10:FF:000002">
    <property type="entry name" value="Phenylalanine--tRNA ligase beta subunit"/>
    <property type="match status" value="1"/>
</dbReference>
<dbReference type="FunFam" id="3.30.70.380:FF:000001">
    <property type="entry name" value="Phenylalanine--tRNA ligase beta subunit"/>
    <property type="match status" value="1"/>
</dbReference>
<dbReference type="FunFam" id="3.30.930.10:FF:000022">
    <property type="entry name" value="Phenylalanine--tRNA ligase beta subunit"/>
    <property type="match status" value="1"/>
</dbReference>
<dbReference type="FunFam" id="3.50.40.10:FF:000001">
    <property type="entry name" value="Phenylalanine--tRNA ligase beta subunit"/>
    <property type="match status" value="1"/>
</dbReference>
<dbReference type="Gene3D" id="3.30.56.10">
    <property type="match status" value="2"/>
</dbReference>
<dbReference type="Gene3D" id="3.30.930.10">
    <property type="entry name" value="Bira Bifunctional Protein, Domain 2"/>
    <property type="match status" value="1"/>
</dbReference>
<dbReference type="Gene3D" id="3.30.70.380">
    <property type="entry name" value="Ferrodoxin-fold anticodon-binding domain"/>
    <property type="match status" value="1"/>
</dbReference>
<dbReference type="Gene3D" id="2.40.50.140">
    <property type="entry name" value="Nucleic acid-binding proteins"/>
    <property type="match status" value="1"/>
</dbReference>
<dbReference type="Gene3D" id="3.50.40.10">
    <property type="entry name" value="Phenylalanyl-trna Synthetase, Chain B, domain 3"/>
    <property type="match status" value="1"/>
</dbReference>
<dbReference type="HAMAP" id="MF_00283">
    <property type="entry name" value="Phe_tRNA_synth_beta1"/>
    <property type="match status" value="1"/>
</dbReference>
<dbReference type="InterPro" id="IPR045864">
    <property type="entry name" value="aa-tRNA-synth_II/BPL/LPL"/>
</dbReference>
<dbReference type="InterPro" id="IPR005146">
    <property type="entry name" value="B3/B4_tRNA-bd"/>
</dbReference>
<dbReference type="InterPro" id="IPR009061">
    <property type="entry name" value="DNA-bd_dom_put_sf"/>
</dbReference>
<dbReference type="InterPro" id="IPR005121">
    <property type="entry name" value="Fdx_antiC-bd"/>
</dbReference>
<dbReference type="InterPro" id="IPR036690">
    <property type="entry name" value="Fdx_antiC-bd_sf"/>
</dbReference>
<dbReference type="InterPro" id="IPR012340">
    <property type="entry name" value="NA-bd_OB-fold"/>
</dbReference>
<dbReference type="InterPro" id="IPR045060">
    <property type="entry name" value="Phe-tRNA-ligase_IIc_bsu"/>
</dbReference>
<dbReference type="InterPro" id="IPR004532">
    <property type="entry name" value="Phe-tRNA-ligase_IIc_bsu_bact"/>
</dbReference>
<dbReference type="InterPro" id="IPR020825">
    <property type="entry name" value="Phe-tRNA_synthase-like_B3/B4"/>
</dbReference>
<dbReference type="InterPro" id="IPR041616">
    <property type="entry name" value="PheRS_beta_core"/>
</dbReference>
<dbReference type="InterPro" id="IPR002547">
    <property type="entry name" value="tRNA-bd_dom"/>
</dbReference>
<dbReference type="InterPro" id="IPR033714">
    <property type="entry name" value="tRNA_bind_bactPheRS"/>
</dbReference>
<dbReference type="InterPro" id="IPR005147">
    <property type="entry name" value="tRNA_synthase_B5-dom"/>
</dbReference>
<dbReference type="NCBIfam" id="TIGR00472">
    <property type="entry name" value="pheT_bact"/>
    <property type="match status" value="1"/>
</dbReference>
<dbReference type="NCBIfam" id="NF045760">
    <property type="entry name" value="YtpR"/>
    <property type="match status" value="1"/>
</dbReference>
<dbReference type="PANTHER" id="PTHR10947:SF0">
    <property type="entry name" value="PHENYLALANINE--TRNA LIGASE BETA SUBUNIT"/>
    <property type="match status" value="1"/>
</dbReference>
<dbReference type="PANTHER" id="PTHR10947">
    <property type="entry name" value="PHENYLALANYL-TRNA SYNTHETASE BETA CHAIN AND LEUCINE-RICH REPEAT-CONTAINING PROTEIN 47"/>
    <property type="match status" value="1"/>
</dbReference>
<dbReference type="Pfam" id="PF03483">
    <property type="entry name" value="B3_4"/>
    <property type="match status" value="1"/>
</dbReference>
<dbReference type="Pfam" id="PF03484">
    <property type="entry name" value="B5"/>
    <property type="match status" value="1"/>
</dbReference>
<dbReference type="Pfam" id="PF03147">
    <property type="entry name" value="FDX-ACB"/>
    <property type="match status" value="1"/>
</dbReference>
<dbReference type="Pfam" id="PF01588">
    <property type="entry name" value="tRNA_bind"/>
    <property type="match status" value="1"/>
</dbReference>
<dbReference type="Pfam" id="PF17759">
    <property type="entry name" value="tRNA_synthFbeta"/>
    <property type="match status" value="1"/>
</dbReference>
<dbReference type="SMART" id="SM00873">
    <property type="entry name" value="B3_4"/>
    <property type="match status" value="1"/>
</dbReference>
<dbReference type="SMART" id="SM00874">
    <property type="entry name" value="B5"/>
    <property type="match status" value="1"/>
</dbReference>
<dbReference type="SMART" id="SM00896">
    <property type="entry name" value="FDX-ACB"/>
    <property type="match status" value="1"/>
</dbReference>
<dbReference type="SUPFAM" id="SSF54991">
    <property type="entry name" value="Anticodon-binding domain of PheRS"/>
    <property type="match status" value="1"/>
</dbReference>
<dbReference type="SUPFAM" id="SSF55681">
    <property type="entry name" value="Class II aaRS and biotin synthetases"/>
    <property type="match status" value="1"/>
</dbReference>
<dbReference type="SUPFAM" id="SSF50249">
    <property type="entry name" value="Nucleic acid-binding proteins"/>
    <property type="match status" value="1"/>
</dbReference>
<dbReference type="SUPFAM" id="SSF56037">
    <property type="entry name" value="PheT/TilS domain"/>
    <property type="match status" value="1"/>
</dbReference>
<dbReference type="SUPFAM" id="SSF46955">
    <property type="entry name" value="Putative DNA-binding domain"/>
    <property type="match status" value="1"/>
</dbReference>
<dbReference type="PROSITE" id="PS51483">
    <property type="entry name" value="B5"/>
    <property type="match status" value="1"/>
</dbReference>
<dbReference type="PROSITE" id="PS51447">
    <property type="entry name" value="FDX_ACB"/>
    <property type="match status" value="1"/>
</dbReference>
<dbReference type="PROSITE" id="PS50886">
    <property type="entry name" value="TRBD"/>
    <property type="match status" value="1"/>
</dbReference>